<sequence>MEGTGLLTAVLVFLFAAVVAVPIAQRLGIGAVLGYLIAGIAIGPWGLGFIRDVDEILHFSELGVVFLMFIIGLELNPAKLWQLRRSIFGVGAGQVVITAAVLGALLYFTQFAWQAAVIGGVGLAMSSTAMALQLMREKGMNRNEGGQLGFSVLLFQDMAVIPALALIPILAGNEGGANDWVKIGLKIAAFAGMLIGGRYLLRPLFRYIVASGVREVFTAAALLVVLGSALFMDALGLSMALGTFIAGILLAESEFQHELEIAIEPFKGLLLGLFFISVGMALDLGVLFTHLLDVLLGVLALVFIKSAILYGLARVFGLRRSVRLQFAGVLSQGGEFAFVLFSAAFSQRVLNAEQLALLLVVVTLSMMTTPLLMQVIDRILVRRYNAQEESDEKPFVEDNDPQVIIVGFGRFGQVIGRLLMANKMRITVLERDVSAVSMMRKYGYKVYYGDATELELLRAAGAEKAKAIVITCNEPEDTMALVHLCQQHFPNLHILARARGRVEAHELLQNGVKDFTRETFSSALELGRKTLLELGMHPHQAYRAQQHFRRLDMRMLRELMPQHHGDVAQISRIKEARRELEDIFQREMLHESRQLDGWDEYE</sequence>
<keyword id="KW-0050">Antiport</keyword>
<keyword id="KW-0997">Cell inner membrane</keyword>
<keyword id="KW-1003">Cell membrane</keyword>
<keyword id="KW-0406">Ion transport</keyword>
<keyword id="KW-0472">Membrane</keyword>
<keyword id="KW-0630">Potassium</keyword>
<keyword id="KW-0633">Potassium transport</keyword>
<keyword id="KW-0812">Transmembrane</keyword>
<keyword id="KW-1133">Transmembrane helix</keyword>
<keyword id="KW-0813">Transport</keyword>
<evidence type="ECO:0000255" key="1">
    <source>
        <dbReference type="HAMAP-Rule" id="MF_01412"/>
    </source>
</evidence>
<evidence type="ECO:0000255" key="2">
    <source>
        <dbReference type="PROSITE-ProRule" id="PRU00543"/>
    </source>
</evidence>
<reference key="1">
    <citation type="journal article" date="2004" name="Proc. Natl. Acad. Sci. U.S.A.">
        <title>Insights into the evolution of Yersinia pestis through whole-genome comparison with Yersinia pseudotuberculosis.</title>
        <authorList>
            <person name="Chain P.S.G."/>
            <person name="Carniel E."/>
            <person name="Larimer F.W."/>
            <person name="Lamerdin J."/>
            <person name="Stoutland P.O."/>
            <person name="Regala W.M."/>
            <person name="Georgescu A.M."/>
            <person name="Vergez L.M."/>
            <person name="Land M.L."/>
            <person name="Motin V.L."/>
            <person name="Brubaker R.R."/>
            <person name="Fowler J."/>
            <person name="Hinnebusch J."/>
            <person name="Marceau M."/>
            <person name="Medigue C."/>
            <person name="Simonet M."/>
            <person name="Chenal-Francisque V."/>
            <person name="Souza B."/>
            <person name="Dacheux D."/>
            <person name="Elliott J.M."/>
            <person name="Derbise A."/>
            <person name="Hauser L.J."/>
            <person name="Garcia E."/>
        </authorList>
    </citation>
    <scope>NUCLEOTIDE SEQUENCE [LARGE SCALE GENOMIC DNA]</scope>
    <source>
        <strain>IP32953</strain>
    </source>
</reference>
<dbReference type="EMBL" id="BX936398">
    <property type="protein sequence ID" value="CAH22952.1"/>
    <property type="molecule type" value="Genomic_DNA"/>
</dbReference>
<dbReference type="RefSeq" id="WP_002212314.1">
    <property type="nucleotide sequence ID" value="NZ_CP009712.1"/>
</dbReference>
<dbReference type="SMR" id="Q664Q5"/>
<dbReference type="GeneID" id="57974412"/>
<dbReference type="KEGG" id="ypo:BZ17_2873"/>
<dbReference type="KEGG" id="yps:YPTB3714"/>
<dbReference type="PATRIC" id="fig|273123.14.peg.3014"/>
<dbReference type="Proteomes" id="UP000001011">
    <property type="component" value="Chromosome"/>
</dbReference>
<dbReference type="GO" id="GO:0005886">
    <property type="term" value="C:plasma membrane"/>
    <property type="evidence" value="ECO:0007669"/>
    <property type="project" value="UniProtKB-SubCell"/>
</dbReference>
<dbReference type="GO" id="GO:0015503">
    <property type="term" value="F:glutathione-regulated potassium exporter activity"/>
    <property type="evidence" value="ECO:0007669"/>
    <property type="project" value="UniProtKB-UniRule"/>
</dbReference>
<dbReference type="GO" id="GO:1902600">
    <property type="term" value="P:proton transmembrane transport"/>
    <property type="evidence" value="ECO:0007669"/>
    <property type="project" value="InterPro"/>
</dbReference>
<dbReference type="FunFam" id="1.20.1530.20:FF:000001">
    <property type="entry name" value="Glutathione-regulated potassium-efflux system protein KefB"/>
    <property type="match status" value="1"/>
</dbReference>
<dbReference type="FunFam" id="3.40.50.720:FF:000036">
    <property type="entry name" value="Glutathione-regulated potassium-efflux system protein KefB"/>
    <property type="match status" value="1"/>
</dbReference>
<dbReference type="Gene3D" id="1.20.1530.20">
    <property type="match status" value="1"/>
</dbReference>
<dbReference type="Gene3D" id="3.40.50.720">
    <property type="entry name" value="NAD(P)-binding Rossmann-like Domain"/>
    <property type="match status" value="1"/>
</dbReference>
<dbReference type="HAMAP" id="MF_01412">
    <property type="entry name" value="K_H_efflux_KefB"/>
    <property type="match status" value="1"/>
</dbReference>
<dbReference type="InterPro" id="IPR006153">
    <property type="entry name" value="Cation/H_exchanger_TM"/>
</dbReference>
<dbReference type="InterPro" id="IPR004771">
    <property type="entry name" value="K/H_exchanger"/>
</dbReference>
<dbReference type="InterPro" id="IPR020884">
    <property type="entry name" value="K_H_efflux_KefB"/>
</dbReference>
<dbReference type="InterPro" id="IPR038770">
    <property type="entry name" value="Na+/solute_symporter_sf"/>
</dbReference>
<dbReference type="InterPro" id="IPR036291">
    <property type="entry name" value="NAD(P)-bd_dom_sf"/>
</dbReference>
<dbReference type="InterPro" id="IPR003148">
    <property type="entry name" value="RCK_N"/>
</dbReference>
<dbReference type="NCBIfam" id="TIGR00932">
    <property type="entry name" value="2a37"/>
    <property type="match status" value="1"/>
</dbReference>
<dbReference type="NCBIfam" id="NF002973">
    <property type="entry name" value="PRK03659.1"/>
    <property type="match status" value="1"/>
</dbReference>
<dbReference type="PANTHER" id="PTHR46157">
    <property type="entry name" value="K(+) EFFLUX ANTIPORTER 3, CHLOROPLASTIC"/>
    <property type="match status" value="1"/>
</dbReference>
<dbReference type="PANTHER" id="PTHR46157:SF4">
    <property type="entry name" value="K(+) EFFLUX ANTIPORTER 3, CHLOROPLASTIC"/>
    <property type="match status" value="1"/>
</dbReference>
<dbReference type="Pfam" id="PF00999">
    <property type="entry name" value="Na_H_Exchanger"/>
    <property type="match status" value="1"/>
</dbReference>
<dbReference type="Pfam" id="PF02254">
    <property type="entry name" value="TrkA_N"/>
    <property type="match status" value="1"/>
</dbReference>
<dbReference type="SUPFAM" id="SSF51735">
    <property type="entry name" value="NAD(P)-binding Rossmann-fold domains"/>
    <property type="match status" value="1"/>
</dbReference>
<dbReference type="PROSITE" id="PS51201">
    <property type="entry name" value="RCK_N"/>
    <property type="match status" value="1"/>
</dbReference>
<name>KEFB_YERPS</name>
<gene>
    <name evidence="1" type="primary">kefB</name>
    <name type="ordered locus">YPTB3714</name>
</gene>
<organism>
    <name type="scientific">Yersinia pseudotuberculosis serotype I (strain IP32953)</name>
    <dbReference type="NCBI Taxonomy" id="273123"/>
    <lineage>
        <taxon>Bacteria</taxon>
        <taxon>Pseudomonadati</taxon>
        <taxon>Pseudomonadota</taxon>
        <taxon>Gammaproteobacteria</taxon>
        <taxon>Enterobacterales</taxon>
        <taxon>Yersiniaceae</taxon>
        <taxon>Yersinia</taxon>
    </lineage>
</organism>
<proteinExistence type="inferred from homology"/>
<feature type="chain" id="PRO_0000196605" description="Glutathione-regulated potassium-efflux system protein KefB">
    <location>
        <begin position="1"/>
        <end position="602"/>
    </location>
</feature>
<feature type="transmembrane region" description="Helical" evidence="1">
    <location>
        <begin position="4"/>
        <end position="24"/>
    </location>
</feature>
<feature type="transmembrane region" description="Helical" evidence="1">
    <location>
        <begin position="29"/>
        <end position="49"/>
    </location>
</feature>
<feature type="transmembrane region" description="Helical" evidence="1">
    <location>
        <begin position="55"/>
        <end position="75"/>
    </location>
</feature>
<feature type="transmembrane region" description="Helical" evidence="1">
    <location>
        <begin position="87"/>
        <end position="107"/>
    </location>
</feature>
<feature type="transmembrane region" description="Helical" evidence="1">
    <location>
        <begin position="115"/>
        <end position="135"/>
    </location>
</feature>
<feature type="transmembrane region" description="Helical" evidence="1">
    <location>
        <begin position="152"/>
        <end position="172"/>
    </location>
</feature>
<feature type="transmembrane region" description="Helical" evidence="1">
    <location>
        <begin position="181"/>
        <end position="201"/>
    </location>
</feature>
<feature type="transmembrane region" description="Helical" evidence="1">
    <location>
        <begin position="207"/>
        <end position="227"/>
    </location>
</feature>
<feature type="transmembrane region" description="Helical" evidence="1">
    <location>
        <begin position="230"/>
        <end position="250"/>
    </location>
</feature>
<feature type="transmembrane region" description="Helical" evidence="1">
    <location>
        <begin position="261"/>
        <end position="281"/>
    </location>
</feature>
<feature type="transmembrane region" description="Helical" evidence="1">
    <location>
        <begin position="296"/>
        <end position="318"/>
    </location>
</feature>
<feature type="transmembrane region" description="Helical" evidence="1">
    <location>
        <begin position="326"/>
        <end position="346"/>
    </location>
</feature>
<feature type="transmembrane region" description="Helical" evidence="1">
    <location>
        <begin position="356"/>
        <end position="376"/>
    </location>
</feature>
<feature type="domain" description="RCK N-terminal" evidence="2">
    <location>
        <begin position="400"/>
        <end position="519"/>
    </location>
</feature>
<comment type="function">
    <text evidence="1">Pore-forming subunit of a potassium efflux system that confers protection against electrophiles. Catalyzes K(+)/H(+) antiport.</text>
</comment>
<comment type="subunit">
    <text evidence="1">Interacts with the regulatory subunit KefG.</text>
</comment>
<comment type="subcellular location">
    <subcellularLocation>
        <location evidence="1">Cell inner membrane</location>
        <topology evidence="1">Multi-pass membrane protein</topology>
    </subcellularLocation>
</comment>
<comment type="similarity">
    <text evidence="1">Belongs to the monovalent cation:proton antiporter 2 (CPA2) transporter (TC 2.A.37) family. KefB subfamily.</text>
</comment>
<protein>
    <recommendedName>
        <fullName evidence="1">Glutathione-regulated potassium-efflux system protein KefB</fullName>
    </recommendedName>
    <alternativeName>
        <fullName evidence="1">K(+)/H(+) antiporter</fullName>
    </alternativeName>
</protein>
<accession>Q664Q5</accession>